<sequence length="402" mass="43827">MVQALTASLMAGALLARGIIGAKADPVNFAGIGGAAYEYNYTATGSFNQSIMPANFTPAGGIDTNDSSPTYHPFSDFDYQSLSLALYHEYIEYDLFNYGLTKFSDAEFDEAGIDAEYRHLIRFMAQQEIGHIELVTNMLGPNAPKACSYQYNFDTVGSFIDFAQTLTKWSESGVYGFLPHLDSRAAAALLLQSITTEARQQMSLRQLQGLFPYPVWFETGIPQSFAWSLIAPFIVGCPAENEKLVWQNFPALHLVSPPVHTNFTNGSFPQYPNGTYMYPAAVSTNRTFPLSLPGQSVELAWDAPGMAVGPNSSYITSTSAGTPRYAAWISQLNVTYAPLNITGNNSGVTYQPSSHLYNDSTQQVINGTNFLVLVDEAIPVTPFNITAINEHVVAGPLVYESG</sequence>
<protein>
    <recommendedName>
        <fullName>Protein rds1</fullName>
    </recommendedName>
</protein>
<organism>
    <name type="scientific">Schizosaccharomyces pombe (strain 972 / ATCC 24843)</name>
    <name type="common">Fission yeast</name>
    <dbReference type="NCBI Taxonomy" id="284812"/>
    <lineage>
        <taxon>Eukaryota</taxon>
        <taxon>Fungi</taxon>
        <taxon>Dikarya</taxon>
        <taxon>Ascomycota</taxon>
        <taxon>Taphrinomycotina</taxon>
        <taxon>Schizosaccharomycetes</taxon>
        <taxon>Schizosaccharomycetales</taxon>
        <taxon>Schizosaccharomycetaceae</taxon>
        <taxon>Schizosaccharomyces</taxon>
    </lineage>
</organism>
<name>RDS1_SCHPO</name>
<keyword id="KW-1185">Reference proteome</keyword>
<proteinExistence type="evidence at transcript level"/>
<comment type="function">
    <text>May have a function in stress-related responses of the cell.</text>
</comment>
<comment type="induction">
    <text>When cells are starved for glucose, ammonium, or phosphate, when they are exposed to a carbon dioxide atmosphere, when they are shifted to higher temperatures or when they enter stationary phase. Adenine-repressible.</text>
</comment>
<accession>P53693</accession>
<accession>Q9UT78</accession>
<reference key="1">
    <citation type="journal article" date="1995" name="Mol. Gen. Genet.">
        <title>Schizosaccharomyces pombe rds1, an adenine-repressible gene regulated by glucose, ammonium, phosphate, carbon dioxide and temperature.</title>
        <authorList>
            <person name="Ludin K.M."/>
            <person name="Hilti N."/>
            <person name="Schweingruber M.E."/>
        </authorList>
    </citation>
    <scope>NUCLEOTIDE SEQUENCE [GENOMIC DNA]</scope>
    <source>
        <strain>972 / ATCC 24843</strain>
    </source>
</reference>
<reference key="2">
    <citation type="journal article" date="2002" name="Nature">
        <title>The genome sequence of Schizosaccharomyces pombe.</title>
        <authorList>
            <person name="Wood V."/>
            <person name="Gwilliam R."/>
            <person name="Rajandream M.A."/>
            <person name="Lyne M.H."/>
            <person name="Lyne R."/>
            <person name="Stewart A."/>
            <person name="Sgouros J.G."/>
            <person name="Peat N."/>
            <person name="Hayles J."/>
            <person name="Baker S.G."/>
            <person name="Basham D."/>
            <person name="Bowman S."/>
            <person name="Brooks K."/>
            <person name="Brown D."/>
            <person name="Brown S."/>
            <person name="Chillingworth T."/>
            <person name="Churcher C.M."/>
            <person name="Collins M."/>
            <person name="Connor R."/>
            <person name="Cronin A."/>
            <person name="Davis P."/>
            <person name="Feltwell T."/>
            <person name="Fraser A."/>
            <person name="Gentles S."/>
            <person name="Goble A."/>
            <person name="Hamlin N."/>
            <person name="Harris D.E."/>
            <person name="Hidalgo J."/>
            <person name="Hodgson G."/>
            <person name="Holroyd S."/>
            <person name="Hornsby T."/>
            <person name="Howarth S."/>
            <person name="Huckle E.J."/>
            <person name="Hunt S."/>
            <person name="Jagels K."/>
            <person name="James K.D."/>
            <person name="Jones L."/>
            <person name="Jones M."/>
            <person name="Leather S."/>
            <person name="McDonald S."/>
            <person name="McLean J."/>
            <person name="Mooney P."/>
            <person name="Moule S."/>
            <person name="Mungall K.L."/>
            <person name="Murphy L.D."/>
            <person name="Niblett D."/>
            <person name="Odell C."/>
            <person name="Oliver K."/>
            <person name="O'Neil S."/>
            <person name="Pearson D."/>
            <person name="Quail M.A."/>
            <person name="Rabbinowitsch E."/>
            <person name="Rutherford K.M."/>
            <person name="Rutter S."/>
            <person name="Saunders D."/>
            <person name="Seeger K."/>
            <person name="Sharp S."/>
            <person name="Skelton J."/>
            <person name="Simmonds M.N."/>
            <person name="Squares R."/>
            <person name="Squares S."/>
            <person name="Stevens K."/>
            <person name="Taylor K."/>
            <person name="Taylor R.G."/>
            <person name="Tivey A."/>
            <person name="Walsh S.V."/>
            <person name="Warren T."/>
            <person name="Whitehead S."/>
            <person name="Woodward J.R."/>
            <person name="Volckaert G."/>
            <person name="Aert R."/>
            <person name="Robben J."/>
            <person name="Grymonprez B."/>
            <person name="Weltjens I."/>
            <person name="Vanstreels E."/>
            <person name="Rieger M."/>
            <person name="Schaefer M."/>
            <person name="Mueller-Auer S."/>
            <person name="Gabel C."/>
            <person name="Fuchs M."/>
            <person name="Duesterhoeft A."/>
            <person name="Fritzc C."/>
            <person name="Holzer E."/>
            <person name="Moestl D."/>
            <person name="Hilbert H."/>
            <person name="Borzym K."/>
            <person name="Langer I."/>
            <person name="Beck A."/>
            <person name="Lehrach H."/>
            <person name="Reinhardt R."/>
            <person name="Pohl T.M."/>
            <person name="Eger P."/>
            <person name="Zimmermann W."/>
            <person name="Wedler H."/>
            <person name="Wambutt R."/>
            <person name="Purnelle B."/>
            <person name="Goffeau A."/>
            <person name="Cadieu E."/>
            <person name="Dreano S."/>
            <person name="Gloux S."/>
            <person name="Lelaure V."/>
            <person name="Mottier S."/>
            <person name="Galibert F."/>
            <person name="Aves S.J."/>
            <person name="Xiang Z."/>
            <person name="Hunt C."/>
            <person name="Moore K."/>
            <person name="Hurst S.M."/>
            <person name="Lucas M."/>
            <person name="Rochet M."/>
            <person name="Gaillardin C."/>
            <person name="Tallada V.A."/>
            <person name="Garzon A."/>
            <person name="Thode G."/>
            <person name="Daga R.R."/>
            <person name="Cruzado L."/>
            <person name="Jimenez J."/>
            <person name="Sanchez M."/>
            <person name="del Rey F."/>
            <person name="Benito J."/>
            <person name="Dominguez A."/>
            <person name="Revuelta J.L."/>
            <person name="Moreno S."/>
            <person name="Armstrong J."/>
            <person name="Forsburg S.L."/>
            <person name="Cerutti L."/>
            <person name="Lowe T."/>
            <person name="McCombie W.R."/>
            <person name="Paulsen I."/>
            <person name="Potashkin J."/>
            <person name="Shpakovski G.V."/>
            <person name="Ussery D."/>
            <person name="Barrell B.G."/>
            <person name="Nurse P."/>
        </authorList>
    </citation>
    <scope>NUCLEOTIDE SEQUENCE [LARGE SCALE GENOMIC DNA]</scope>
    <source>
        <strain>972 / ATCC 24843</strain>
    </source>
</reference>
<evidence type="ECO:0000305" key="1"/>
<gene>
    <name type="primary">rds1</name>
    <name type="ORF">SPAC343.12</name>
</gene>
<feature type="chain" id="PRO_0000097212" description="Protein rds1">
    <location>
        <begin position="1"/>
        <end position="402"/>
    </location>
</feature>
<feature type="sequence conflict" description="In Ref. 1; CAA54544." evidence="1" ref="1">
    <original>R</original>
    <variation>G</variation>
    <location>
        <position position="17"/>
    </location>
</feature>
<dbReference type="EMBL" id="X77328">
    <property type="protein sequence ID" value="CAA54544.1"/>
    <property type="molecule type" value="Genomic_DNA"/>
</dbReference>
<dbReference type="EMBL" id="CU329670">
    <property type="protein sequence ID" value="CAB52275.1"/>
    <property type="molecule type" value="Genomic_DNA"/>
</dbReference>
<dbReference type="PIR" id="S58477">
    <property type="entry name" value="S58477"/>
</dbReference>
<dbReference type="RefSeq" id="NP_593432.1">
    <property type="nucleotide sequence ID" value="NM_001018865.2"/>
</dbReference>
<dbReference type="SMR" id="P53693"/>
<dbReference type="BioGRID" id="279499">
    <property type="interactions" value="34"/>
</dbReference>
<dbReference type="STRING" id="284812.P53693"/>
<dbReference type="SwissPalm" id="P53693"/>
<dbReference type="PaxDb" id="4896-SPAC343.12.1"/>
<dbReference type="EnsemblFungi" id="SPAC343.12.1">
    <property type="protein sequence ID" value="SPAC343.12.1:pep"/>
    <property type="gene ID" value="SPAC343.12"/>
</dbReference>
<dbReference type="GeneID" id="2543066"/>
<dbReference type="KEGG" id="spo:2543066"/>
<dbReference type="PomBase" id="SPAC343.12">
    <property type="gene designation" value="rds1"/>
</dbReference>
<dbReference type="VEuPathDB" id="FungiDB:SPAC343.12"/>
<dbReference type="eggNOG" id="ENOG502QSE0">
    <property type="taxonomic scope" value="Eukaryota"/>
</dbReference>
<dbReference type="HOGENOM" id="CLU_028606_0_0_1"/>
<dbReference type="InParanoid" id="P53693"/>
<dbReference type="OMA" id="VYGFLNH"/>
<dbReference type="PhylomeDB" id="P53693"/>
<dbReference type="PRO" id="PR:P53693"/>
<dbReference type="Proteomes" id="UP000002485">
    <property type="component" value="Chromosome I"/>
</dbReference>
<dbReference type="GO" id="GO:0005783">
    <property type="term" value="C:endoplasmic reticulum"/>
    <property type="evidence" value="ECO:0007005"/>
    <property type="project" value="PomBase"/>
</dbReference>
<dbReference type="InterPro" id="IPR039254">
    <property type="entry name" value="Rds1"/>
</dbReference>
<dbReference type="PANTHER" id="PTHR38705">
    <property type="entry name" value="PROTEIN RDS1"/>
    <property type="match status" value="1"/>
</dbReference>
<dbReference type="PANTHER" id="PTHR38705:SF1">
    <property type="entry name" value="PROTEIN RDS1"/>
    <property type="match status" value="1"/>
</dbReference>
<dbReference type="Pfam" id="PF13668">
    <property type="entry name" value="Ferritin_2"/>
    <property type="match status" value="1"/>
</dbReference>